<evidence type="ECO:0000250" key="1"/>
<evidence type="ECO:0000250" key="2">
    <source>
        <dbReference type="UniProtKB" id="Q8WVB6"/>
    </source>
</evidence>
<evidence type="ECO:0000255" key="3"/>
<evidence type="ECO:0000256" key="4">
    <source>
        <dbReference type="SAM" id="MobiDB-lite"/>
    </source>
</evidence>
<evidence type="ECO:0000305" key="5"/>
<feature type="chain" id="PRO_0000340082" description="Chromosome transmission fidelity protein 18 homolog">
    <location>
        <begin position="1"/>
        <end position="969"/>
    </location>
</feature>
<feature type="region of interest" description="Disordered" evidence="4">
    <location>
        <begin position="30"/>
        <end position="97"/>
    </location>
</feature>
<feature type="region of interest" description="Disordered" evidence="4">
    <location>
        <begin position="250"/>
        <end position="269"/>
    </location>
</feature>
<feature type="region of interest" description="Disordered" evidence="4">
    <location>
        <begin position="318"/>
        <end position="340"/>
    </location>
</feature>
<feature type="region of interest" description="Disordered" evidence="4">
    <location>
        <begin position="856"/>
        <end position="889"/>
    </location>
</feature>
<feature type="compositionally biased region" description="Low complexity" evidence="4">
    <location>
        <begin position="257"/>
        <end position="268"/>
    </location>
</feature>
<feature type="compositionally biased region" description="Basic and acidic residues" evidence="4">
    <location>
        <begin position="876"/>
        <end position="889"/>
    </location>
</feature>
<feature type="binding site" evidence="3">
    <location>
        <begin position="369"/>
        <end position="376"/>
    </location>
    <ligand>
        <name>ATP</name>
        <dbReference type="ChEBI" id="CHEBI:30616"/>
    </ligand>
</feature>
<feature type="modified residue" description="Phosphothreonine" evidence="2">
    <location>
        <position position="51"/>
    </location>
</feature>
<feature type="modified residue" description="Phosphoserine" evidence="2">
    <location>
        <position position="221"/>
    </location>
</feature>
<feature type="sequence conflict" description="In Ref. 2; AAH24142." evidence="5" ref="2">
    <original>G</original>
    <variation>E</variation>
    <location>
        <position position="880"/>
    </location>
</feature>
<feature type="sequence conflict" description="In Ref. 1; BAC37079." evidence="5" ref="1">
    <original>A</original>
    <variation>V</variation>
    <location>
        <position position="885"/>
    </location>
</feature>
<feature type="sequence conflict" description="In Ref. 1; BAC37079." evidence="5" ref="1">
    <original>K</original>
    <variation>T</variation>
    <location>
        <position position="898"/>
    </location>
</feature>
<gene>
    <name type="primary">Chtf18</name>
    <name type="synonym">Ctf18</name>
</gene>
<organism>
    <name type="scientific">Mus musculus</name>
    <name type="common">Mouse</name>
    <dbReference type="NCBI Taxonomy" id="10090"/>
    <lineage>
        <taxon>Eukaryota</taxon>
        <taxon>Metazoa</taxon>
        <taxon>Chordata</taxon>
        <taxon>Craniata</taxon>
        <taxon>Vertebrata</taxon>
        <taxon>Euteleostomi</taxon>
        <taxon>Mammalia</taxon>
        <taxon>Eutheria</taxon>
        <taxon>Euarchontoglires</taxon>
        <taxon>Glires</taxon>
        <taxon>Rodentia</taxon>
        <taxon>Myomorpha</taxon>
        <taxon>Muroidea</taxon>
        <taxon>Muridae</taxon>
        <taxon>Murinae</taxon>
        <taxon>Mus</taxon>
        <taxon>Mus</taxon>
    </lineage>
</organism>
<dbReference type="EMBL" id="AK077947">
    <property type="protein sequence ID" value="BAC37079.1"/>
    <property type="molecule type" value="mRNA"/>
</dbReference>
<dbReference type="EMBL" id="BC024142">
    <property type="protein sequence ID" value="AAH24142.1"/>
    <property type="molecule type" value="mRNA"/>
</dbReference>
<dbReference type="CCDS" id="CCDS28523.1"/>
<dbReference type="RefSeq" id="NP_663384.2">
    <property type="nucleotide sequence ID" value="NM_145409.2"/>
</dbReference>
<dbReference type="SMR" id="Q8BIW9"/>
<dbReference type="BioGRID" id="229573">
    <property type="interactions" value="6"/>
</dbReference>
<dbReference type="FunCoup" id="Q8BIW9">
    <property type="interactions" value="2765"/>
</dbReference>
<dbReference type="STRING" id="10090.ENSMUSP00000043896"/>
<dbReference type="GlyGen" id="Q8BIW9">
    <property type="glycosylation" value="2 sites, 1 O-linked glycan (1 site)"/>
</dbReference>
<dbReference type="iPTMnet" id="Q8BIW9"/>
<dbReference type="PhosphoSitePlus" id="Q8BIW9"/>
<dbReference type="jPOST" id="Q8BIW9"/>
<dbReference type="PaxDb" id="10090-ENSMUSP00000043896"/>
<dbReference type="PeptideAtlas" id="Q8BIW9"/>
<dbReference type="ProteomicsDB" id="283977"/>
<dbReference type="Pumba" id="Q8BIW9"/>
<dbReference type="DNASU" id="214901"/>
<dbReference type="GeneID" id="214901"/>
<dbReference type="KEGG" id="mmu:214901"/>
<dbReference type="UCSC" id="uc008bbk.2">
    <property type="organism name" value="mouse"/>
</dbReference>
<dbReference type="AGR" id="MGI:2384887"/>
<dbReference type="CTD" id="63922"/>
<dbReference type="MGI" id="MGI:2384887">
    <property type="gene designation" value="Chtf18"/>
</dbReference>
<dbReference type="eggNOG" id="KOG1969">
    <property type="taxonomic scope" value="Eukaryota"/>
</dbReference>
<dbReference type="InParanoid" id="Q8BIW9"/>
<dbReference type="OrthoDB" id="2195431at2759"/>
<dbReference type="PhylomeDB" id="Q8BIW9"/>
<dbReference type="TreeFam" id="TF314392"/>
<dbReference type="Reactome" id="R-MMU-174411">
    <property type="pathway name" value="Polymerase switching on the C-strand of the telomere"/>
</dbReference>
<dbReference type="BioGRID-ORCS" id="214901">
    <property type="hits" value="4 hits in 79 CRISPR screens"/>
</dbReference>
<dbReference type="PRO" id="PR:Q8BIW9"/>
<dbReference type="Proteomes" id="UP000000589">
    <property type="component" value="Unplaced"/>
</dbReference>
<dbReference type="RNAct" id="Q8BIW9">
    <property type="molecule type" value="protein"/>
</dbReference>
<dbReference type="GO" id="GO:0031390">
    <property type="term" value="C:Ctf18 RFC-like complex"/>
    <property type="evidence" value="ECO:0000250"/>
    <property type="project" value="UniProtKB"/>
</dbReference>
<dbReference type="GO" id="GO:0005737">
    <property type="term" value="C:cytoplasm"/>
    <property type="evidence" value="ECO:0000314"/>
    <property type="project" value="MGI"/>
</dbReference>
<dbReference type="GO" id="GO:0001673">
    <property type="term" value="C:male germ cell nucleus"/>
    <property type="evidence" value="ECO:0000314"/>
    <property type="project" value="MGI"/>
</dbReference>
<dbReference type="GO" id="GO:0005634">
    <property type="term" value="C:nucleus"/>
    <property type="evidence" value="ECO:0000314"/>
    <property type="project" value="MGI"/>
</dbReference>
<dbReference type="GO" id="GO:0005524">
    <property type="term" value="F:ATP binding"/>
    <property type="evidence" value="ECO:0007669"/>
    <property type="project" value="UniProtKB-KW"/>
</dbReference>
<dbReference type="GO" id="GO:0016887">
    <property type="term" value="F:ATP hydrolysis activity"/>
    <property type="evidence" value="ECO:0007669"/>
    <property type="project" value="InterPro"/>
</dbReference>
<dbReference type="GO" id="GO:0003677">
    <property type="term" value="F:DNA binding"/>
    <property type="evidence" value="ECO:0007669"/>
    <property type="project" value="UniProtKB-KW"/>
</dbReference>
<dbReference type="GO" id="GO:0007059">
    <property type="term" value="P:chromosome segregation"/>
    <property type="evidence" value="ECO:0000315"/>
    <property type="project" value="MGI"/>
</dbReference>
<dbReference type="GO" id="GO:0006260">
    <property type="term" value="P:DNA replication"/>
    <property type="evidence" value="ECO:0007669"/>
    <property type="project" value="UniProtKB-KW"/>
</dbReference>
<dbReference type="GO" id="GO:0007281">
    <property type="term" value="P:germ cell development"/>
    <property type="evidence" value="ECO:0000315"/>
    <property type="project" value="MGI"/>
</dbReference>
<dbReference type="GO" id="GO:0007140">
    <property type="term" value="P:male meiotic nuclear division"/>
    <property type="evidence" value="ECO:0000315"/>
    <property type="project" value="MGI"/>
</dbReference>
<dbReference type="GO" id="GO:0051985">
    <property type="term" value="P:negative regulation of chromosome segregation"/>
    <property type="evidence" value="ECO:0000315"/>
    <property type="project" value="MGI"/>
</dbReference>
<dbReference type="GO" id="GO:1900264">
    <property type="term" value="P:positive regulation of DNA-directed DNA polymerase activity"/>
    <property type="evidence" value="ECO:0000250"/>
    <property type="project" value="UniProtKB"/>
</dbReference>
<dbReference type="GO" id="GO:0007131">
    <property type="term" value="P:reciprocal meiotic recombination"/>
    <property type="evidence" value="ECO:0000315"/>
    <property type="project" value="MGI"/>
</dbReference>
<dbReference type="CDD" id="cd00009">
    <property type="entry name" value="AAA"/>
    <property type="match status" value="1"/>
</dbReference>
<dbReference type="CDD" id="cd18140">
    <property type="entry name" value="HLD_clamp_RFC"/>
    <property type="match status" value="1"/>
</dbReference>
<dbReference type="FunFam" id="3.40.50.300:FF:001083">
    <property type="entry name" value="Chromosome transmission fidelity factor 18"/>
    <property type="match status" value="1"/>
</dbReference>
<dbReference type="FunFam" id="1.10.8.60:FF:000074">
    <property type="entry name" value="Chromosome transmission fidelity protein 18"/>
    <property type="match status" value="1"/>
</dbReference>
<dbReference type="Gene3D" id="1.10.8.60">
    <property type="match status" value="1"/>
</dbReference>
<dbReference type="Gene3D" id="3.40.50.300">
    <property type="entry name" value="P-loop containing nucleotide triphosphate hydrolases"/>
    <property type="match status" value="1"/>
</dbReference>
<dbReference type="InterPro" id="IPR003593">
    <property type="entry name" value="AAA+_ATPase"/>
</dbReference>
<dbReference type="InterPro" id="IPR003959">
    <property type="entry name" value="ATPase_AAA_core"/>
</dbReference>
<dbReference type="InterPro" id="IPR053016">
    <property type="entry name" value="CTF18-RFC_complex"/>
</dbReference>
<dbReference type="InterPro" id="IPR027417">
    <property type="entry name" value="P-loop_NTPase"/>
</dbReference>
<dbReference type="InterPro" id="IPR047854">
    <property type="entry name" value="RFC_lid"/>
</dbReference>
<dbReference type="PANTHER" id="PTHR46765">
    <property type="entry name" value="P-LOOP CONTAINING NUCLEOSIDE TRIPHOSPHATE HYDROLASES SUPERFAMILY PROTEIN"/>
    <property type="match status" value="1"/>
</dbReference>
<dbReference type="PANTHER" id="PTHR46765:SF1">
    <property type="entry name" value="P-LOOP CONTAINING NUCLEOSIDE TRIPHOSPHATE HYDROLASES SUPERFAMILY PROTEIN"/>
    <property type="match status" value="1"/>
</dbReference>
<dbReference type="Pfam" id="PF00004">
    <property type="entry name" value="AAA"/>
    <property type="match status" value="1"/>
</dbReference>
<dbReference type="SMART" id="SM00382">
    <property type="entry name" value="AAA"/>
    <property type="match status" value="1"/>
</dbReference>
<dbReference type="SUPFAM" id="SSF52540">
    <property type="entry name" value="P-loop containing nucleoside triphosphate hydrolases"/>
    <property type="match status" value="1"/>
</dbReference>
<sequence>MEDYEEDLYGVEDDFQNQFAAELEVLAELEGTRDQAPPGTLQTPASRPPLTFEEAIAGGDTVPRPCPAGSPGNVNRNTRKNVRRDQPAPSSPMVKRPRLDVVKKLNFEPDMEELLYPDSPPGDITPPPSPEVFPEMLDAGYSDANADKDLMQTLPSPRNRNPVLRRPPILEDYINVTSTSGERAFLVLRADLIGPGVQNPLLDVHWRGCGQLDLLGVPFASLKEQVDSKRRQQLLEDAQQLSDTLHSLRSEGEEAVLEGPPAEEPAPGQNTAQHCLWVDEFAPQHYTELLSDDFTNRCLLKWLKLWDLVVFGRERPARKPRPGVETTRVGKEATAPGKWKSHEQALEEMLEAELDPSQRPRQKVALLCGPPGLGKTTLAHVVARHAGYCVVEMNASDDRSPEAFRTRIEAATQMESVLGVGGRPNCLVIDEIDGAPTAAINVLLGILNRKGPQEADQGGTAVAAGGRRRRAEGGLLTRPIICICNDQFTPSLRQLKQQALLLHVPPTLPSRLVQRLQEISLQHGMRSDPGALVALCEKTDNDIRACINTLQFLYGRGRRELSVKAVQTTHVGLKDQRKGLFSVWQEVFQLPRTQRRIVGQDLMLPAHALLLSNGDKGSLTLASQRFYHILRVTTSAGEHEKVVQGLFDNFLRLRLRDSSLSTVCCALDWLAFDDLLEQAAHRGQSFQLLCYLPFVPAAFHVLFASSHVPRITFPSSQQEAQTRMSQTRNHIQTLVSGMAPTTRSRATPQALVLDTLCLLLDVLAPKLRPVSTQLYSAHEKQQLSCLVGTMLAYSLTYHQERTPDGQYLYKLEPNVEEVCRFPELPARKPLTYQAKQLIAREIEMEKMRRAEALAWARSGPQVDQGSSGPASLWTDSGEKGTRQPAPRNHEQRLEHIMKRATVQEQPERDFFGRVVIRKVAVPSREVEAPQKDADEWRMGVAVGRSEVWFRFNEGVSNAVRRSLYIRDLL</sequence>
<accession>Q8BIW9</accession>
<accession>Q8R1R7</accession>
<proteinExistence type="evidence at protein level"/>
<reference key="1">
    <citation type="journal article" date="2005" name="Science">
        <title>The transcriptional landscape of the mammalian genome.</title>
        <authorList>
            <person name="Carninci P."/>
            <person name="Kasukawa T."/>
            <person name="Katayama S."/>
            <person name="Gough J."/>
            <person name="Frith M.C."/>
            <person name="Maeda N."/>
            <person name="Oyama R."/>
            <person name="Ravasi T."/>
            <person name="Lenhard B."/>
            <person name="Wells C."/>
            <person name="Kodzius R."/>
            <person name="Shimokawa K."/>
            <person name="Bajic V.B."/>
            <person name="Brenner S.E."/>
            <person name="Batalov S."/>
            <person name="Forrest A.R."/>
            <person name="Zavolan M."/>
            <person name="Davis M.J."/>
            <person name="Wilming L.G."/>
            <person name="Aidinis V."/>
            <person name="Allen J.E."/>
            <person name="Ambesi-Impiombato A."/>
            <person name="Apweiler R."/>
            <person name="Aturaliya R.N."/>
            <person name="Bailey T.L."/>
            <person name="Bansal M."/>
            <person name="Baxter L."/>
            <person name="Beisel K.W."/>
            <person name="Bersano T."/>
            <person name="Bono H."/>
            <person name="Chalk A.M."/>
            <person name="Chiu K.P."/>
            <person name="Choudhary V."/>
            <person name="Christoffels A."/>
            <person name="Clutterbuck D.R."/>
            <person name="Crowe M.L."/>
            <person name="Dalla E."/>
            <person name="Dalrymple B.P."/>
            <person name="de Bono B."/>
            <person name="Della Gatta G."/>
            <person name="di Bernardo D."/>
            <person name="Down T."/>
            <person name="Engstrom P."/>
            <person name="Fagiolini M."/>
            <person name="Faulkner G."/>
            <person name="Fletcher C.F."/>
            <person name="Fukushima T."/>
            <person name="Furuno M."/>
            <person name="Futaki S."/>
            <person name="Gariboldi M."/>
            <person name="Georgii-Hemming P."/>
            <person name="Gingeras T.R."/>
            <person name="Gojobori T."/>
            <person name="Green R.E."/>
            <person name="Gustincich S."/>
            <person name="Harbers M."/>
            <person name="Hayashi Y."/>
            <person name="Hensch T.K."/>
            <person name="Hirokawa N."/>
            <person name="Hill D."/>
            <person name="Huminiecki L."/>
            <person name="Iacono M."/>
            <person name="Ikeo K."/>
            <person name="Iwama A."/>
            <person name="Ishikawa T."/>
            <person name="Jakt M."/>
            <person name="Kanapin A."/>
            <person name="Katoh M."/>
            <person name="Kawasawa Y."/>
            <person name="Kelso J."/>
            <person name="Kitamura H."/>
            <person name="Kitano H."/>
            <person name="Kollias G."/>
            <person name="Krishnan S.P."/>
            <person name="Kruger A."/>
            <person name="Kummerfeld S.K."/>
            <person name="Kurochkin I.V."/>
            <person name="Lareau L.F."/>
            <person name="Lazarevic D."/>
            <person name="Lipovich L."/>
            <person name="Liu J."/>
            <person name="Liuni S."/>
            <person name="McWilliam S."/>
            <person name="Madan Babu M."/>
            <person name="Madera M."/>
            <person name="Marchionni L."/>
            <person name="Matsuda H."/>
            <person name="Matsuzawa S."/>
            <person name="Miki H."/>
            <person name="Mignone F."/>
            <person name="Miyake S."/>
            <person name="Morris K."/>
            <person name="Mottagui-Tabar S."/>
            <person name="Mulder N."/>
            <person name="Nakano N."/>
            <person name="Nakauchi H."/>
            <person name="Ng P."/>
            <person name="Nilsson R."/>
            <person name="Nishiguchi S."/>
            <person name="Nishikawa S."/>
            <person name="Nori F."/>
            <person name="Ohara O."/>
            <person name="Okazaki Y."/>
            <person name="Orlando V."/>
            <person name="Pang K.C."/>
            <person name="Pavan W.J."/>
            <person name="Pavesi G."/>
            <person name="Pesole G."/>
            <person name="Petrovsky N."/>
            <person name="Piazza S."/>
            <person name="Reed J."/>
            <person name="Reid J.F."/>
            <person name="Ring B.Z."/>
            <person name="Ringwald M."/>
            <person name="Rost B."/>
            <person name="Ruan Y."/>
            <person name="Salzberg S.L."/>
            <person name="Sandelin A."/>
            <person name="Schneider C."/>
            <person name="Schoenbach C."/>
            <person name="Sekiguchi K."/>
            <person name="Semple C.A."/>
            <person name="Seno S."/>
            <person name="Sessa L."/>
            <person name="Sheng Y."/>
            <person name="Shibata Y."/>
            <person name="Shimada H."/>
            <person name="Shimada K."/>
            <person name="Silva D."/>
            <person name="Sinclair B."/>
            <person name="Sperling S."/>
            <person name="Stupka E."/>
            <person name="Sugiura K."/>
            <person name="Sultana R."/>
            <person name="Takenaka Y."/>
            <person name="Taki K."/>
            <person name="Tammoja K."/>
            <person name="Tan S.L."/>
            <person name="Tang S."/>
            <person name="Taylor M.S."/>
            <person name="Tegner J."/>
            <person name="Teichmann S.A."/>
            <person name="Ueda H.R."/>
            <person name="van Nimwegen E."/>
            <person name="Verardo R."/>
            <person name="Wei C.L."/>
            <person name="Yagi K."/>
            <person name="Yamanishi H."/>
            <person name="Zabarovsky E."/>
            <person name="Zhu S."/>
            <person name="Zimmer A."/>
            <person name="Hide W."/>
            <person name="Bult C."/>
            <person name="Grimmond S.M."/>
            <person name="Teasdale R.D."/>
            <person name="Liu E.T."/>
            <person name="Brusic V."/>
            <person name="Quackenbush J."/>
            <person name="Wahlestedt C."/>
            <person name="Mattick J.S."/>
            <person name="Hume D.A."/>
            <person name="Kai C."/>
            <person name="Sasaki D."/>
            <person name="Tomaru Y."/>
            <person name="Fukuda S."/>
            <person name="Kanamori-Katayama M."/>
            <person name="Suzuki M."/>
            <person name="Aoki J."/>
            <person name="Arakawa T."/>
            <person name="Iida J."/>
            <person name="Imamura K."/>
            <person name="Itoh M."/>
            <person name="Kato T."/>
            <person name="Kawaji H."/>
            <person name="Kawagashira N."/>
            <person name="Kawashima T."/>
            <person name="Kojima M."/>
            <person name="Kondo S."/>
            <person name="Konno H."/>
            <person name="Nakano K."/>
            <person name="Ninomiya N."/>
            <person name="Nishio T."/>
            <person name="Okada M."/>
            <person name="Plessy C."/>
            <person name="Shibata K."/>
            <person name="Shiraki T."/>
            <person name="Suzuki S."/>
            <person name="Tagami M."/>
            <person name="Waki K."/>
            <person name="Watahiki A."/>
            <person name="Okamura-Oho Y."/>
            <person name="Suzuki H."/>
            <person name="Kawai J."/>
            <person name="Hayashizaki Y."/>
        </authorList>
    </citation>
    <scope>NUCLEOTIDE SEQUENCE [LARGE SCALE MRNA]</scope>
    <source>
        <strain>C57BL/6J</strain>
        <tissue>Testis</tissue>
    </source>
</reference>
<reference key="2">
    <citation type="journal article" date="2004" name="Genome Res.">
        <title>The status, quality, and expansion of the NIH full-length cDNA project: the Mammalian Gene Collection (MGC).</title>
        <authorList>
            <consortium name="The MGC Project Team"/>
        </authorList>
    </citation>
    <scope>NUCLEOTIDE SEQUENCE [LARGE SCALE MRNA]</scope>
    <source>
        <strain>C57BL/6J</strain>
        <strain>FVB/N</strain>
        <tissue>Mammary tumor</tissue>
    </source>
</reference>
<reference key="3">
    <citation type="journal article" date="2010" name="Cell">
        <title>A tissue-specific atlas of mouse protein phosphorylation and expression.</title>
        <authorList>
            <person name="Huttlin E.L."/>
            <person name="Jedrychowski M.P."/>
            <person name="Elias J.E."/>
            <person name="Goswami T."/>
            <person name="Rad R."/>
            <person name="Beausoleil S.A."/>
            <person name="Villen J."/>
            <person name="Haas W."/>
            <person name="Sowa M.E."/>
            <person name="Gygi S.P."/>
        </authorList>
    </citation>
    <scope>IDENTIFICATION BY MASS SPECTROMETRY [LARGE SCALE ANALYSIS]</scope>
    <source>
        <tissue>Spleen</tissue>
        <tissue>Testis</tissue>
    </source>
</reference>
<name>CTF18_MOUSE</name>
<protein>
    <recommendedName>
        <fullName>Chromosome transmission fidelity protein 18 homolog</fullName>
    </recommendedName>
</protein>
<comment type="function">
    <text evidence="2">Chromosome cohesion factor involved in sister chromatid cohesion and fidelity of chromosome transmission. Component of one of the cell nuclear antigen loader complexes, CTF18-replication factor C (CTF18-RFC), which consists of CTF18, CTF8, DCC1, RFC2, RFC3, RFC4 and RFC5. The CTF18-RFC complex binds to single-stranded and primed DNAs and has weak ATPase activity that is stimulated by the presence of primed DNA, replication protein A (RPA) and by proliferating cell nuclear antigen (PCNA). The CTF18-RFC complex catalyzes the ATP-dependent loading of PCNA onto primed and gapped DNA. Interacts with and stimulates DNA polymerase POLH. During DNA repair synthesis, involved in loading DNA polymerase POLE at the sites of local damage.</text>
</comment>
<comment type="subunit">
    <text evidence="2">Component of the CTF18-RFC complex, which consists of CTF18, CTF8, DCC1, RFC2, RFC3, RFC4 and RFC5. During assembly of the CTF18-RFC complex, CTF18 may first assemble into a subcomplex with RFC2, RFC3, RFC4 and RFC5. CTF18 then interacts directly with CTF8, which in turn interacts with DCC1. The CTF18-RFC complex associates with PCNA and with DNA polymerase POLH. The CTF18-RFC complex does not interact with the Rad9/Rad1/Hus1 complex. CTF18 interacts with SMC1A and RAD21. Interacts with DDX11.</text>
</comment>
<comment type="subcellular location">
    <subcellularLocation>
        <location>Nucleus</location>
    </subcellularLocation>
    <text evidence="1">Associates with chromatin during S phase.</text>
</comment>
<comment type="similarity">
    <text evidence="5">Belongs to the activator 1 small subunits family. CTF18 subfamily.</text>
</comment>
<keyword id="KW-0067">ATP-binding</keyword>
<keyword id="KW-0131">Cell cycle</keyword>
<keyword id="KW-0235">DNA replication</keyword>
<keyword id="KW-0238">DNA-binding</keyword>
<keyword id="KW-0547">Nucleotide-binding</keyword>
<keyword id="KW-0539">Nucleus</keyword>
<keyword id="KW-0597">Phosphoprotein</keyword>
<keyword id="KW-1185">Reference proteome</keyword>